<accession>Q8DH84</accession>
<proteinExistence type="evidence at protein level"/>
<feature type="signal peptide" evidence="2">
    <location>
        <begin position="1"/>
        <end position="19"/>
    </location>
</feature>
<feature type="chain" id="PRO_5004307555" description="CyanoP" evidence="2">
    <location>
        <begin position="20"/>
        <end position="183"/>
    </location>
</feature>
<feature type="binding site" evidence="9">
    <location>
        <position position="31"/>
    </location>
    <ligand>
        <name>Zn(2+)</name>
        <dbReference type="ChEBI" id="CHEBI:29105"/>
        <label>1</label>
    </ligand>
</feature>
<feature type="binding site" evidence="9">
    <location>
        <position position="34"/>
    </location>
    <ligand>
        <name>Zn(2+)</name>
        <dbReference type="ChEBI" id="CHEBI:29105"/>
        <label>1</label>
    </ligand>
</feature>
<feature type="binding site" evidence="9">
    <location>
        <position position="54"/>
    </location>
    <ligand>
        <name>Zn(2+)</name>
        <dbReference type="ChEBI" id="CHEBI:29105"/>
        <label>1</label>
    </ligand>
</feature>
<feature type="binding site" evidence="9">
    <location>
        <position position="58"/>
    </location>
    <ligand>
        <name>Zn(2+)</name>
        <dbReference type="ChEBI" id="CHEBI:29105"/>
        <label>2</label>
    </ligand>
</feature>
<feature type="binding site" evidence="9">
    <location>
        <position position="63"/>
    </location>
    <ligand>
        <name>Zn(2+)</name>
        <dbReference type="ChEBI" id="CHEBI:29105"/>
        <label>2</label>
    </ligand>
</feature>
<feature type="binding site" evidence="9">
    <location>
        <position position="87"/>
    </location>
    <ligand>
        <name>Zn(2+)</name>
        <dbReference type="ChEBI" id="CHEBI:29105"/>
        <label>2</label>
    </ligand>
</feature>
<feature type="binding site" evidence="9">
    <location>
        <position position="91"/>
    </location>
    <ligand>
        <name>Zn(2+)</name>
        <dbReference type="ChEBI" id="CHEBI:29105"/>
        <label>2</label>
    </ligand>
</feature>
<feature type="binding site" evidence="9">
    <location>
        <position position="142"/>
    </location>
    <ligand>
        <name>Zn(2+)</name>
        <dbReference type="ChEBI" id="CHEBI:29105"/>
        <label>3</label>
    </ligand>
</feature>
<feature type="binding site" evidence="9">
    <location>
        <position position="163"/>
    </location>
    <ligand>
        <name>Zn(2+)</name>
        <dbReference type="ChEBI" id="CHEBI:29105"/>
        <label>3</label>
    </ligand>
</feature>
<feature type="binding site" evidence="9">
    <location>
        <position position="164"/>
    </location>
    <ligand>
        <name>Zn(2+)</name>
        <dbReference type="ChEBI" id="CHEBI:29105"/>
        <label>1</label>
    </ligand>
</feature>
<feature type="lipid moiety-binding region" description="N-palmitoyl cysteine" evidence="2">
    <location>
        <position position="20"/>
    </location>
</feature>
<feature type="lipid moiety-binding region" description="S-diacylglycerol cysteine" evidence="2">
    <location>
        <position position="20"/>
    </location>
</feature>
<feature type="strand" evidence="10">
    <location>
        <begin position="26"/>
        <end position="31"/>
    </location>
</feature>
<feature type="turn" evidence="10">
    <location>
        <begin position="32"/>
        <end position="35"/>
    </location>
</feature>
<feature type="strand" evidence="10">
    <location>
        <begin position="36"/>
        <end position="41"/>
    </location>
</feature>
<feature type="strand" evidence="10">
    <location>
        <begin position="44"/>
        <end position="47"/>
    </location>
</feature>
<feature type="strand" evidence="10">
    <location>
        <begin position="53"/>
        <end position="61"/>
    </location>
</feature>
<feature type="strand" evidence="10">
    <location>
        <begin position="65"/>
        <end position="73"/>
    </location>
</feature>
<feature type="helix" evidence="10">
    <location>
        <begin position="81"/>
        <end position="83"/>
    </location>
</feature>
<feature type="helix" evidence="10">
    <location>
        <begin position="86"/>
        <end position="96"/>
    </location>
</feature>
<feature type="strand" evidence="10">
    <location>
        <begin position="106"/>
        <end position="117"/>
    </location>
</feature>
<feature type="strand" evidence="10">
    <location>
        <begin position="120"/>
        <end position="130"/>
    </location>
</feature>
<feature type="strand" evidence="10">
    <location>
        <begin position="140"/>
        <end position="150"/>
    </location>
</feature>
<feature type="strand" evidence="10">
    <location>
        <begin position="153"/>
        <end position="162"/>
    </location>
</feature>
<feature type="helix" evidence="10">
    <location>
        <begin position="163"/>
        <end position="165"/>
    </location>
</feature>
<feature type="helix" evidence="10">
    <location>
        <begin position="166"/>
        <end position="178"/>
    </location>
</feature>
<comment type="function">
    <text evidence="1 4">Plays a role in the early stages of photosystem II (PSII) assembly; binds to D2 (psbD) and may facilitate its incorporation into PSII (By similarity). Present in less than 1% of PSII preparations (PubMed:24838684).</text>
</comment>
<comment type="cofactor">
    <cofactor evidence="3">
        <name>Zn(2+)</name>
        <dbReference type="ChEBI" id="CHEBI:29105"/>
    </cofactor>
</comment>
<comment type="subunit">
    <text evidence="3 4">Monomer (PubMed:20698571). Present in very small amounts in PSII (PubMed:24838684).</text>
</comment>
<comment type="subcellular location">
    <subcellularLocation>
        <location evidence="2 3">Cellular thylakoid membrane</location>
        <topology evidence="2 7">Lipid-anchor</topology>
    </subcellularLocation>
    <text evidence="6">Probably associated with PSII at the lumenal side of the thylakoid membrane.</text>
</comment>
<comment type="miscellaneous">
    <text evidence="3">Crystallizes with Zn(2+), but it is not known if this is physiologically relevant.</text>
</comment>
<comment type="similarity">
    <text evidence="6">Belongs to the PsbP family. CyanoP subfamily.</text>
</comment>
<evidence type="ECO:0000250" key="1">
    <source>
        <dbReference type="UniProtKB" id="P73952"/>
    </source>
</evidence>
<evidence type="ECO:0000255" key="2">
    <source>
        <dbReference type="PROSITE-ProRule" id="PRU00303"/>
    </source>
</evidence>
<evidence type="ECO:0000269" key="3">
    <source>
    </source>
</evidence>
<evidence type="ECO:0000269" key="4">
    <source>
    </source>
</evidence>
<evidence type="ECO:0000303" key="5">
    <source>
    </source>
</evidence>
<evidence type="ECO:0000305" key="6"/>
<evidence type="ECO:0000305" key="7">
    <source>
    </source>
</evidence>
<evidence type="ECO:0000312" key="8">
    <source>
        <dbReference type="EMBL" id="BAC09627.1"/>
    </source>
</evidence>
<evidence type="ECO:0007744" key="9">
    <source>
        <dbReference type="PDB" id="2XB3"/>
    </source>
</evidence>
<evidence type="ECO:0007829" key="10">
    <source>
        <dbReference type="PDB" id="2XB3"/>
    </source>
</evidence>
<protein>
    <recommendedName>
        <fullName evidence="5">CyanoP</fullName>
    </recommendedName>
    <alternativeName>
        <fullName evidence="6">Photosystem II lipoprotein PsbP</fullName>
    </alternativeName>
</protein>
<reference evidence="8" key="1">
    <citation type="journal article" date="2002" name="DNA Res.">
        <title>Complete genome structure of the thermophilic cyanobacterium Thermosynechococcus elongatus BP-1.</title>
        <authorList>
            <person name="Nakamura Y."/>
            <person name="Kaneko T."/>
            <person name="Sato S."/>
            <person name="Ikeuchi M."/>
            <person name="Katoh H."/>
            <person name="Sasamoto S."/>
            <person name="Watanabe A."/>
            <person name="Iriguchi M."/>
            <person name="Kawashima K."/>
            <person name="Kimura T."/>
            <person name="Kishida Y."/>
            <person name="Kiyokawa C."/>
            <person name="Kohara M."/>
            <person name="Matsumoto M."/>
            <person name="Matsuno A."/>
            <person name="Nakazaki N."/>
            <person name="Shimpo S."/>
            <person name="Sugimoto M."/>
            <person name="Takeuchi C."/>
            <person name="Yamada M."/>
            <person name="Tabata S."/>
        </authorList>
    </citation>
    <scope>NUCLEOTIDE SEQUENCE [LARGE SCALE GENOMIC DNA]</scope>
    <source>
        <strain>NIES-2133 / IAM M-273 / BP-1</strain>
    </source>
</reference>
<reference key="2">
    <citation type="journal article" date="2014" name="Photosyn. Res.">
        <title>Crystal structure of CyanoQ from the thermophilic cyanobacterium Thermosynechococcus elongatus and detection in isolated photosystem II complexes.</title>
        <authorList>
            <person name="Michoux F."/>
            <person name="Boehm M."/>
            <person name="Bialek W."/>
            <person name="Takasaka K."/>
            <person name="Maghlaoui K."/>
            <person name="Barber J."/>
            <person name="Murray J.W."/>
            <person name="Nixon P.J."/>
        </authorList>
    </citation>
    <scope>STOICHIOMETRY</scope>
    <scope>SUBUNIT</scope>
    <scope>SUBCELLULAR LOCATION</scope>
    <source>
        <strain>NIES-2133 / IAM M-273 / BP-1</strain>
    </source>
</reference>
<reference evidence="9" key="3">
    <citation type="journal article" date="2010" name="Biochemistry">
        <title>Structure of CyanoP at 2.8 A: implications for the evolution and function of the PsbP subunit of photosystem II.</title>
        <authorList>
            <person name="Michoux F."/>
            <person name="Takasaka K."/>
            <person name="Boehm M."/>
            <person name="Nixon P.J."/>
            <person name="Murray J.W."/>
        </authorList>
    </citation>
    <scope>X-RAY CRYSTALLOGRAPHY (2.80 ANGSTROMS) OF 21-183 IN COMPLEX WITH ZINC</scope>
    <scope>SUBCELLULAR LOCATION</scope>
</reference>
<name>PSBP_THEVB</name>
<gene>
    <name evidence="8" type="primary">psbP</name>
    <name evidence="8" type="ordered locus">tlr2075</name>
</gene>
<organism>
    <name type="scientific">Thermosynechococcus vestitus (strain NIES-2133 / IAM M-273 / BP-1)</name>
    <dbReference type="NCBI Taxonomy" id="197221"/>
    <lineage>
        <taxon>Bacteria</taxon>
        <taxon>Bacillati</taxon>
        <taxon>Cyanobacteriota</taxon>
        <taxon>Cyanophyceae</taxon>
        <taxon>Acaryochloridales</taxon>
        <taxon>Thermosynechococcaceae</taxon>
        <taxon>Thermosynechococcus</taxon>
    </lineage>
</organism>
<dbReference type="EMBL" id="BA000039">
    <property type="protein sequence ID" value="BAC09627.1"/>
    <property type="molecule type" value="Genomic_DNA"/>
</dbReference>
<dbReference type="RefSeq" id="NP_682865.1">
    <property type="nucleotide sequence ID" value="NC_004113.1"/>
</dbReference>
<dbReference type="RefSeq" id="WP_011057910.1">
    <property type="nucleotide sequence ID" value="NC_004113.1"/>
</dbReference>
<dbReference type="PDB" id="2XB3">
    <property type="method" value="X-ray"/>
    <property type="resolution" value="2.80 A"/>
    <property type="chains" value="A=19-183"/>
</dbReference>
<dbReference type="PDBsum" id="2XB3"/>
<dbReference type="SMR" id="Q8DH84"/>
<dbReference type="STRING" id="197221.gene:10748684"/>
<dbReference type="EnsemblBacteria" id="BAC09627">
    <property type="protein sequence ID" value="BAC09627"/>
    <property type="gene ID" value="BAC09627"/>
</dbReference>
<dbReference type="KEGG" id="tel:tlr2075"/>
<dbReference type="PATRIC" id="fig|197221.4.peg.2171"/>
<dbReference type="eggNOG" id="ENOG502ZCA9">
    <property type="taxonomic scope" value="Bacteria"/>
</dbReference>
<dbReference type="EvolutionaryTrace" id="Q8DH84"/>
<dbReference type="Proteomes" id="UP000000440">
    <property type="component" value="Chromosome"/>
</dbReference>
<dbReference type="GO" id="GO:0019898">
    <property type="term" value="C:extrinsic component of membrane"/>
    <property type="evidence" value="ECO:0007669"/>
    <property type="project" value="InterPro"/>
</dbReference>
<dbReference type="GO" id="GO:0009654">
    <property type="term" value="C:photosystem II oxygen evolving complex"/>
    <property type="evidence" value="ECO:0007669"/>
    <property type="project" value="InterPro"/>
</dbReference>
<dbReference type="GO" id="GO:0031676">
    <property type="term" value="C:plasma membrane-derived thylakoid membrane"/>
    <property type="evidence" value="ECO:0007669"/>
    <property type="project" value="UniProtKB-SubCell"/>
</dbReference>
<dbReference type="GO" id="GO:0005509">
    <property type="term" value="F:calcium ion binding"/>
    <property type="evidence" value="ECO:0007669"/>
    <property type="project" value="InterPro"/>
</dbReference>
<dbReference type="GO" id="GO:0015979">
    <property type="term" value="P:photosynthesis"/>
    <property type="evidence" value="ECO:0007669"/>
    <property type="project" value="InterPro"/>
</dbReference>
<dbReference type="Gene3D" id="3.40.1000.10">
    <property type="entry name" value="Mog1/PsbP, alpha/beta/alpha sandwich"/>
    <property type="match status" value="1"/>
</dbReference>
<dbReference type="InterPro" id="IPR016123">
    <property type="entry name" value="Mog1/PsbP_a/b/a-sand"/>
</dbReference>
<dbReference type="InterPro" id="IPR002683">
    <property type="entry name" value="PsbP_C"/>
</dbReference>
<dbReference type="NCBIfam" id="NF040946">
    <property type="entry name" value="PSII_PsbP"/>
    <property type="match status" value="1"/>
</dbReference>
<dbReference type="PANTHER" id="PTHR31407">
    <property type="match status" value="1"/>
</dbReference>
<dbReference type="PANTHER" id="PTHR31407:SF16">
    <property type="entry name" value="PSBP DOMAIN-CONTAINING PROTEIN 7, CHLOROPLASTIC"/>
    <property type="match status" value="1"/>
</dbReference>
<dbReference type="Pfam" id="PF01789">
    <property type="entry name" value="PsbP"/>
    <property type="match status" value="1"/>
</dbReference>
<dbReference type="SUPFAM" id="SSF55724">
    <property type="entry name" value="Mog1p/PsbP-like"/>
    <property type="match status" value="1"/>
</dbReference>
<dbReference type="PROSITE" id="PS51257">
    <property type="entry name" value="PROKAR_LIPOPROTEIN"/>
    <property type="match status" value="1"/>
</dbReference>
<sequence length="183" mass="20081">MLQRFFATALAIFVVLLGGCSATSGLQAYVDSYDGYEFLYPRGWVQVQVEDPVDVVFHDIIETTENVSVVVNTVASTKSLEELGSPEEVGDRLLRNIIAPSESGRSSALIAATSQKADDKTYYILEYAVTLPGDGNTAQQRHNLSSIAVSRGKVYTLSVSAPEERWPKVEDQFKTIVSSFTVY</sequence>
<keyword id="KW-0002">3D-structure</keyword>
<keyword id="KW-0449">Lipoprotein</keyword>
<keyword id="KW-0472">Membrane</keyword>
<keyword id="KW-0479">Metal-binding</keyword>
<keyword id="KW-0564">Palmitate</keyword>
<keyword id="KW-1185">Reference proteome</keyword>
<keyword id="KW-0732">Signal</keyword>
<keyword id="KW-0793">Thylakoid</keyword>
<keyword id="KW-0862">Zinc</keyword>